<keyword id="KW-0028">Amino-acid biosynthesis</keyword>
<keyword id="KW-0963">Cytoplasm</keyword>
<keyword id="KW-0368">Histidine biosynthesis</keyword>
<sequence length="394" mass="42546">MATVDRWLLPDGIEEVLPPEAARIEAARRQVLDLFHRWGYEFVVTPHIEYLESLLTGAGQDLDLRTFKVTDPASGRLMGFRADITPQVARMDAHSLRREGPSRLCYAGSVLHAQPRALSTSRSPIQLGAELYGDPSPASDVEVISLMLEMLEMAEVPDVHMDLGHVGIYRGLARAAGLSGEVEQQLFDALQRKAVDEVEALTADLPAELRGMLRALAELCGGRDALEQGRARLAAAPADVQVALNELIEIADSLAGRFPGLPLYFDLGELRGYHYHTGVVFAAFVPGVGQSIAQGGRYDDIGADFGRARPATGFSTDLKSLVTLGQARLDQAVSGIWAPAEGAGLWQAVQRLRRDGQRVVQALPGQDAASAREAGCDRQLALRDGNWQVAPLAS</sequence>
<feature type="chain" id="PRO_1000117678" description="ATP phosphoribosyltransferase regulatory subunit">
    <location>
        <begin position="1"/>
        <end position="394"/>
    </location>
</feature>
<organism>
    <name type="scientific">Pseudomonas aeruginosa (strain LESB58)</name>
    <dbReference type="NCBI Taxonomy" id="557722"/>
    <lineage>
        <taxon>Bacteria</taxon>
        <taxon>Pseudomonadati</taxon>
        <taxon>Pseudomonadota</taxon>
        <taxon>Gammaproteobacteria</taxon>
        <taxon>Pseudomonadales</taxon>
        <taxon>Pseudomonadaceae</taxon>
        <taxon>Pseudomonas</taxon>
    </lineage>
</organism>
<dbReference type="EMBL" id="FM209186">
    <property type="protein sequence ID" value="CAW30079.1"/>
    <property type="molecule type" value="Genomic_DNA"/>
</dbReference>
<dbReference type="RefSeq" id="WP_003095644.1">
    <property type="nucleotide sequence ID" value="NC_011770.1"/>
</dbReference>
<dbReference type="SMR" id="B7V202"/>
<dbReference type="KEGG" id="pag:PLES_53251"/>
<dbReference type="HOGENOM" id="CLU_025113_0_1_6"/>
<dbReference type="UniPathway" id="UPA00031">
    <property type="reaction ID" value="UER00006"/>
</dbReference>
<dbReference type="GO" id="GO:0005737">
    <property type="term" value="C:cytoplasm"/>
    <property type="evidence" value="ECO:0007669"/>
    <property type="project" value="UniProtKB-SubCell"/>
</dbReference>
<dbReference type="GO" id="GO:0000105">
    <property type="term" value="P:L-histidine biosynthetic process"/>
    <property type="evidence" value="ECO:0007669"/>
    <property type="project" value="UniProtKB-UniRule"/>
</dbReference>
<dbReference type="CDD" id="cd00773">
    <property type="entry name" value="HisRS-like_core"/>
    <property type="match status" value="1"/>
</dbReference>
<dbReference type="FunFam" id="3.30.930.10:FF:000161">
    <property type="entry name" value="ATP phosphoribosyltransferase regulatory subunit"/>
    <property type="match status" value="1"/>
</dbReference>
<dbReference type="Gene3D" id="3.30.930.10">
    <property type="entry name" value="Bira Bifunctional Protein, Domain 2"/>
    <property type="match status" value="1"/>
</dbReference>
<dbReference type="HAMAP" id="MF_00125">
    <property type="entry name" value="HisZ"/>
    <property type="match status" value="1"/>
</dbReference>
<dbReference type="InterPro" id="IPR045864">
    <property type="entry name" value="aa-tRNA-synth_II/BPL/LPL"/>
</dbReference>
<dbReference type="InterPro" id="IPR041715">
    <property type="entry name" value="HisRS-like_core"/>
</dbReference>
<dbReference type="InterPro" id="IPR004516">
    <property type="entry name" value="HisRS/HisZ"/>
</dbReference>
<dbReference type="InterPro" id="IPR004517">
    <property type="entry name" value="HisZ"/>
</dbReference>
<dbReference type="NCBIfam" id="TIGR00443">
    <property type="entry name" value="hisZ_biosyn_reg"/>
    <property type="match status" value="1"/>
</dbReference>
<dbReference type="NCBIfam" id="NF008935">
    <property type="entry name" value="PRK12292.1-1"/>
    <property type="match status" value="1"/>
</dbReference>
<dbReference type="NCBIfam" id="NF008937">
    <property type="entry name" value="PRK12292.1-4"/>
    <property type="match status" value="1"/>
</dbReference>
<dbReference type="NCBIfam" id="NF009086">
    <property type="entry name" value="PRK12421.1"/>
    <property type="match status" value="1"/>
</dbReference>
<dbReference type="PANTHER" id="PTHR11476:SF7">
    <property type="entry name" value="HISTIDINE--TRNA LIGASE"/>
    <property type="match status" value="1"/>
</dbReference>
<dbReference type="PANTHER" id="PTHR11476">
    <property type="entry name" value="HISTIDYL-TRNA SYNTHETASE"/>
    <property type="match status" value="1"/>
</dbReference>
<dbReference type="Pfam" id="PF13393">
    <property type="entry name" value="tRNA-synt_His"/>
    <property type="match status" value="1"/>
</dbReference>
<dbReference type="PIRSF" id="PIRSF001549">
    <property type="entry name" value="His-tRNA_synth"/>
    <property type="match status" value="1"/>
</dbReference>
<dbReference type="SUPFAM" id="SSF55681">
    <property type="entry name" value="Class II aaRS and biotin synthetases"/>
    <property type="match status" value="1"/>
</dbReference>
<gene>
    <name evidence="1" type="primary">hisZ</name>
    <name type="ordered locus">PLES_53251</name>
</gene>
<reference key="1">
    <citation type="journal article" date="2009" name="Genome Res.">
        <title>Newly introduced genomic prophage islands are critical determinants of in vivo competitiveness in the Liverpool epidemic strain of Pseudomonas aeruginosa.</title>
        <authorList>
            <person name="Winstanley C."/>
            <person name="Langille M.G.I."/>
            <person name="Fothergill J.L."/>
            <person name="Kukavica-Ibrulj I."/>
            <person name="Paradis-Bleau C."/>
            <person name="Sanschagrin F."/>
            <person name="Thomson N.R."/>
            <person name="Winsor G.L."/>
            <person name="Quail M.A."/>
            <person name="Lennard N."/>
            <person name="Bignell A."/>
            <person name="Clarke L."/>
            <person name="Seeger K."/>
            <person name="Saunders D."/>
            <person name="Harris D."/>
            <person name="Parkhill J."/>
            <person name="Hancock R.E.W."/>
            <person name="Brinkman F.S.L."/>
            <person name="Levesque R.C."/>
        </authorList>
    </citation>
    <scope>NUCLEOTIDE SEQUENCE [LARGE SCALE GENOMIC DNA]</scope>
    <source>
        <strain>LESB58</strain>
    </source>
</reference>
<comment type="function">
    <text evidence="1">Required for the first step of histidine biosynthesis. May allow the feedback regulation of ATP phosphoribosyltransferase activity by histidine.</text>
</comment>
<comment type="pathway">
    <text evidence="1">Amino-acid biosynthesis; L-histidine biosynthesis; L-histidine from 5-phospho-alpha-D-ribose 1-diphosphate: step 1/9.</text>
</comment>
<comment type="subunit">
    <text evidence="1">Heteromultimer composed of HisG and HisZ subunits.</text>
</comment>
<comment type="subcellular location">
    <subcellularLocation>
        <location evidence="1">Cytoplasm</location>
    </subcellularLocation>
</comment>
<comment type="miscellaneous">
    <text>This function is generally fulfilled by the C-terminal part of HisG, which is missing in some bacteria such as this one.</text>
</comment>
<comment type="similarity">
    <text evidence="1">Belongs to the class-II aminoacyl-tRNA synthetase family. HisZ subfamily.</text>
</comment>
<name>HISZ_PSEA8</name>
<evidence type="ECO:0000255" key="1">
    <source>
        <dbReference type="HAMAP-Rule" id="MF_00125"/>
    </source>
</evidence>
<protein>
    <recommendedName>
        <fullName evidence="1">ATP phosphoribosyltransferase regulatory subunit</fullName>
    </recommendedName>
</protein>
<accession>B7V202</accession>
<proteinExistence type="inferred from homology"/>